<evidence type="ECO:0000255" key="1">
    <source>
        <dbReference type="HAMAP-Rule" id="MF_00051"/>
    </source>
</evidence>
<reference key="1">
    <citation type="submission" date="2007-08" db="EMBL/GenBank/DDBJ databases">
        <title>Complete sequence of Thermotoga lettingae TMO.</title>
        <authorList>
            <consortium name="US DOE Joint Genome Institute"/>
            <person name="Copeland A."/>
            <person name="Lucas S."/>
            <person name="Lapidus A."/>
            <person name="Barry K."/>
            <person name="Glavina del Rio T."/>
            <person name="Dalin E."/>
            <person name="Tice H."/>
            <person name="Pitluck S."/>
            <person name="Foster B."/>
            <person name="Bruce D."/>
            <person name="Schmutz J."/>
            <person name="Larimer F."/>
            <person name="Land M."/>
            <person name="Hauser L."/>
            <person name="Kyrpides N."/>
            <person name="Mikhailova N."/>
            <person name="Nelson K."/>
            <person name="Gogarten J.P."/>
            <person name="Noll K."/>
            <person name="Richardson P."/>
        </authorList>
    </citation>
    <scope>NUCLEOTIDE SEQUENCE [LARGE SCALE GENOMIC DNA]</scope>
    <source>
        <strain>ATCC BAA-301 / DSM 14385 / NBRC 107922 / TMO</strain>
    </source>
</reference>
<accession>A8F595</accession>
<dbReference type="EC" id="2.1.2.1" evidence="1"/>
<dbReference type="EMBL" id="CP000812">
    <property type="protein sequence ID" value="ABV33329.1"/>
    <property type="molecule type" value="Genomic_DNA"/>
</dbReference>
<dbReference type="RefSeq" id="WP_012002810.1">
    <property type="nucleotide sequence ID" value="NZ_BSDV01000001.1"/>
</dbReference>
<dbReference type="SMR" id="A8F595"/>
<dbReference type="STRING" id="416591.Tlet_0763"/>
<dbReference type="KEGG" id="tle:Tlet_0763"/>
<dbReference type="eggNOG" id="COG0112">
    <property type="taxonomic scope" value="Bacteria"/>
</dbReference>
<dbReference type="HOGENOM" id="CLU_022477_2_1_0"/>
<dbReference type="OrthoDB" id="9803846at2"/>
<dbReference type="UniPathway" id="UPA00193"/>
<dbReference type="UniPathway" id="UPA00288">
    <property type="reaction ID" value="UER01023"/>
</dbReference>
<dbReference type="Proteomes" id="UP000002016">
    <property type="component" value="Chromosome"/>
</dbReference>
<dbReference type="GO" id="GO:0005829">
    <property type="term" value="C:cytosol"/>
    <property type="evidence" value="ECO:0007669"/>
    <property type="project" value="TreeGrafter"/>
</dbReference>
<dbReference type="GO" id="GO:0004372">
    <property type="term" value="F:glycine hydroxymethyltransferase activity"/>
    <property type="evidence" value="ECO:0007669"/>
    <property type="project" value="UniProtKB-UniRule"/>
</dbReference>
<dbReference type="GO" id="GO:0030170">
    <property type="term" value="F:pyridoxal phosphate binding"/>
    <property type="evidence" value="ECO:0007669"/>
    <property type="project" value="UniProtKB-UniRule"/>
</dbReference>
<dbReference type="GO" id="GO:0019264">
    <property type="term" value="P:glycine biosynthetic process from serine"/>
    <property type="evidence" value="ECO:0007669"/>
    <property type="project" value="UniProtKB-UniRule"/>
</dbReference>
<dbReference type="GO" id="GO:0035999">
    <property type="term" value="P:tetrahydrofolate interconversion"/>
    <property type="evidence" value="ECO:0007669"/>
    <property type="project" value="UniProtKB-UniRule"/>
</dbReference>
<dbReference type="CDD" id="cd00378">
    <property type="entry name" value="SHMT"/>
    <property type="match status" value="1"/>
</dbReference>
<dbReference type="FunFam" id="3.40.640.10:FF:000001">
    <property type="entry name" value="Serine hydroxymethyltransferase"/>
    <property type="match status" value="1"/>
</dbReference>
<dbReference type="FunFam" id="3.90.1150.10:FF:000003">
    <property type="entry name" value="Serine hydroxymethyltransferase"/>
    <property type="match status" value="1"/>
</dbReference>
<dbReference type="Gene3D" id="3.90.1150.10">
    <property type="entry name" value="Aspartate Aminotransferase, domain 1"/>
    <property type="match status" value="1"/>
</dbReference>
<dbReference type="Gene3D" id="3.40.640.10">
    <property type="entry name" value="Type I PLP-dependent aspartate aminotransferase-like (Major domain)"/>
    <property type="match status" value="1"/>
</dbReference>
<dbReference type="HAMAP" id="MF_00051">
    <property type="entry name" value="SHMT"/>
    <property type="match status" value="1"/>
</dbReference>
<dbReference type="InterPro" id="IPR015424">
    <property type="entry name" value="PyrdxlP-dep_Trfase"/>
</dbReference>
<dbReference type="InterPro" id="IPR015421">
    <property type="entry name" value="PyrdxlP-dep_Trfase_major"/>
</dbReference>
<dbReference type="InterPro" id="IPR015422">
    <property type="entry name" value="PyrdxlP-dep_Trfase_small"/>
</dbReference>
<dbReference type="InterPro" id="IPR001085">
    <property type="entry name" value="Ser_HO-MeTrfase"/>
</dbReference>
<dbReference type="InterPro" id="IPR049943">
    <property type="entry name" value="Ser_HO-MeTrfase-like"/>
</dbReference>
<dbReference type="InterPro" id="IPR019798">
    <property type="entry name" value="Ser_HO-MeTrfase_PLP_BS"/>
</dbReference>
<dbReference type="InterPro" id="IPR039429">
    <property type="entry name" value="SHMT-like_dom"/>
</dbReference>
<dbReference type="NCBIfam" id="NF000586">
    <property type="entry name" value="PRK00011.1"/>
    <property type="match status" value="1"/>
</dbReference>
<dbReference type="PANTHER" id="PTHR11680">
    <property type="entry name" value="SERINE HYDROXYMETHYLTRANSFERASE"/>
    <property type="match status" value="1"/>
</dbReference>
<dbReference type="PANTHER" id="PTHR11680:SF35">
    <property type="entry name" value="SERINE HYDROXYMETHYLTRANSFERASE 1"/>
    <property type="match status" value="1"/>
</dbReference>
<dbReference type="Pfam" id="PF00464">
    <property type="entry name" value="SHMT"/>
    <property type="match status" value="1"/>
</dbReference>
<dbReference type="PIRSF" id="PIRSF000412">
    <property type="entry name" value="SHMT"/>
    <property type="match status" value="1"/>
</dbReference>
<dbReference type="SUPFAM" id="SSF53383">
    <property type="entry name" value="PLP-dependent transferases"/>
    <property type="match status" value="1"/>
</dbReference>
<dbReference type="PROSITE" id="PS00096">
    <property type="entry name" value="SHMT"/>
    <property type="match status" value="1"/>
</dbReference>
<proteinExistence type="inferred from homology"/>
<keyword id="KW-0028">Amino-acid biosynthesis</keyword>
<keyword id="KW-0963">Cytoplasm</keyword>
<keyword id="KW-0554">One-carbon metabolism</keyword>
<keyword id="KW-0663">Pyridoxal phosphate</keyword>
<keyword id="KW-1185">Reference proteome</keyword>
<keyword id="KW-0808">Transferase</keyword>
<organism>
    <name type="scientific">Pseudothermotoga lettingae (strain ATCC BAA-301 / DSM 14385 / NBRC 107922 / TMO)</name>
    <name type="common">Thermotoga lettingae</name>
    <dbReference type="NCBI Taxonomy" id="416591"/>
    <lineage>
        <taxon>Bacteria</taxon>
        <taxon>Thermotogati</taxon>
        <taxon>Thermotogota</taxon>
        <taxon>Thermotogae</taxon>
        <taxon>Thermotogales</taxon>
        <taxon>Thermotogaceae</taxon>
        <taxon>Pseudothermotoga</taxon>
    </lineage>
</organism>
<name>GLYA_PSELT</name>
<comment type="function">
    <text evidence="1">Catalyzes the reversible interconversion of serine and glycine with tetrahydrofolate (THF) serving as the one-carbon carrier. This reaction serves as the major source of one-carbon groups required for the biosynthesis of purines, thymidylate, methionine, and other important biomolecules. Also exhibits THF-independent aldolase activity toward beta-hydroxyamino acids, producing glycine and aldehydes, via a retro-aldol mechanism.</text>
</comment>
<comment type="catalytic activity">
    <reaction evidence="1">
        <text>(6R)-5,10-methylene-5,6,7,8-tetrahydrofolate + glycine + H2O = (6S)-5,6,7,8-tetrahydrofolate + L-serine</text>
        <dbReference type="Rhea" id="RHEA:15481"/>
        <dbReference type="ChEBI" id="CHEBI:15377"/>
        <dbReference type="ChEBI" id="CHEBI:15636"/>
        <dbReference type="ChEBI" id="CHEBI:33384"/>
        <dbReference type="ChEBI" id="CHEBI:57305"/>
        <dbReference type="ChEBI" id="CHEBI:57453"/>
        <dbReference type="EC" id="2.1.2.1"/>
    </reaction>
</comment>
<comment type="cofactor">
    <cofactor evidence="1">
        <name>pyridoxal 5'-phosphate</name>
        <dbReference type="ChEBI" id="CHEBI:597326"/>
    </cofactor>
</comment>
<comment type="pathway">
    <text evidence="1">One-carbon metabolism; tetrahydrofolate interconversion.</text>
</comment>
<comment type="pathway">
    <text evidence="1">Amino-acid biosynthesis; glycine biosynthesis; glycine from L-serine: step 1/1.</text>
</comment>
<comment type="subunit">
    <text evidence="1">Homodimer.</text>
</comment>
<comment type="subcellular location">
    <subcellularLocation>
        <location evidence="1">Cytoplasm</location>
    </subcellularLocation>
</comment>
<comment type="similarity">
    <text evidence="1">Belongs to the SHMT family.</text>
</comment>
<feature type="chain" id="PRO_1000057373" description="Serine hydroxymethyltransferase">
    <location>
        <begin position="1"/>
        <end position="424"/>
    </location>
</feature>
<feature type="binding site" evidence="1">
    <location>
        <position position="118"/>
    </location>
    <ligand>
        <name>(6S)-5,6,7,8-tetrahydrofolate</name>
        <dbReference type="ChEBI" id="CHEBI:57453"/>
    </ligand>
</feature>
<feature type="binding site" evidence="1">
    <location>
        <begin position="122"/>
        <end position="124"/>
    </location>
    <ligand>
        <name>(6S)-5,6,7,8-tetrahydrofolate</name>
        <dbReference type="ChEBI" id="CHEBI:57453"/>
    </ligand>
</feature>
<feature type="binding site" evidence="1">
    <location>
        <begin position="351"/>
        <end position="353"/>
    </location>
    <ligand>
        <name>(6S)-5,6,7,8-tetrahydrofolate</name>
        <dbReference type="ChEBI" id="CHEBI:57453"/>
    </ligand>
</feature>
<feature type="site" description="Plays an important role in substrate specificity" evidence="1">
    <location>
        <position position="226"/>
    </location>
</feature>
<feature type="modified residue" description="N6-(pyridoxal phosphate)lysine" evidence="1">
    <location>
        <position position="227"/>
    </location>
</feature>
<protein>
    <recommendedName>
        <fullName evidence="1">Serine hydroxymethyltransferase</fullName>
        <shortName evidence="1">SHMT</shortName>
        <shortName evidence="1">Serine methylase</shortName>
        <ecNumber evidence="1">2.1.2.1</ecNumber>
    </recommendedName>
</protein>
<sequence>MWDHLKVTDSEVHDLLIGELKRQEYGLELIASENFASVAVMEAMGSILTNKYAEGYPAKRYYGGCEWVDKIEDLARERAKQLFKVKYANVQPHSGSQANMAAYLSIAEPGDVLMGMSLSHGGHLTHGASVNFSGKLFKVIQYGVNPETEMINYDEVRSMALQYKPKIIVAGGSAYSRIIDFKKFREIADEAGAYLVVDMAHFAGLVAAGLYPNPAEYAHIVTSTTHKTLRGPRGGLILTNDAEIYKAVNKTVFPGTQGGPLMHVIAAKAVCFKEAMSSGFVEYQKQVIANAKTLANELSSMGLRIVSGGTDTHLMLVDLTPLNVTGKAAEKALEKCGVTVNKNTIPNETRSPFVASGIRIGTPAVTTRGMREKEMKKIAELIFEVLKNVLDEEGNIPPHIQANVQMAVKKLCEEFPLYVDKIII</sequence>
<gene>
    <name evidence="1" type="primary">glyA</name>
    <name type="ordered locus">Tlet_0763</name>
</gene>